<dbReference type="EMBL" id="BC142276">
    <property type="protein sequence ID" value="AAI42277.1"/>
    <property type="molecule type" value="mRNA"/>
</dbReference>
<dbReference type="RefSeq" id="NP_001092497.1">
    <property type="nucleotide sequence ID" value="NM_001099027.1"/>
</dbReference>
<dbReference type="SMR" id="A5PJX7"/>
<dbReference type="FunCoup" id="A5PJX7">
    <property type="interactions" value="149"/>
</dbReference>
<dbReference type="STRING" id="9913.ENSBTAP00000019308"/>
<dbReference type="GlyCosmos" id="A5PJX7">
    <property type="glycosylation" value="3 sites, No reported glycans"/>
</dbReference>
<dbReference type="GlyGen" id="A5PJX7">
    <property type="glycosylation" value="3 sites"/>
</dbReference>
<dbReference type="PaxDb" id="9913-ENSBTAP00000019308"/>
<dbReference type="Ensembl" id="ENSBTAT00000019308.6">
    <property type="protein sequence ID" value="ENSBTAP00000019308.4"/>
    <property type="gene ID" value="ENSBTAG00000014525.6"/>
</dbReference>
<dbReference type="GeneID" id="523784"/>
<dbReference type="KEGG" id="bta:523784"/>
<dbReference type="CTD" id="6540"/>
<dbReference type="VEuPathDB" id="HostDB:ENSBTAG00000014525"/>
<dbReference type="VGNC" id="VGNC:34916">
    <property type="gene designation" value="SLC6A13"/>
</dbReference>
<dbReference type="eggNOG" id="KOG3660">
    <property type="taxonomic scope" value="Eukaryota"/>
</dbReference>
<dbReference type="GeneTree" id="ENSGT00940000157478"/>
<dbReference type="HOGENOM" id="CLU_006855_9_5_1"/>
<dbReference type="InParanoid" id="A5PJX7"/>
<dbReference type="OMA" id="FTPAVCM"/>
<dbReference type="OrthoDB" id="6581954at2759"/>
<dbReference type="TreeFam" id="TF343812"/>
<dbReference type="Reactome" id="R-BTA-442660">
    <property type="pathway name" value="Na+/Cl- dependent neurotransmitter transporters"/>
</dbReference>
<dbReference type="Reactome" id="R-BTA-888593">
    <property type="pathway name" value="Reuptake of GABA"/>
</dbReference>
<dbReference type="Proteomes" id="UP000009136">
    <property type="component" value="Chromosome 5"/>
</dbReference>
<dbReference type="Bgee" id="ENSBTAG00000014525">
    <property type="expression patterns" value="Expressed in midbrain and 20 other cell types or tissues"/>
</dbReference>
<dbReference type="GO" id="GO:0016323">
    <property type="term" value="C:basolateral plasma membrane"/>
    <property type="evidence" value="ECO:0007669"/>
    <property type="project" value="UniProtKB-SubCell"/>
</dbReference>
<dbReference type="GO" id="GO:0042995">
    <property type="term" value="C:cell projection"/>
    <property type="evidence" value="ECO:0000318"/>
    <property type="project" value="GO_Central"/>
</dbReference>
<dbReference type="GO" id="GO:0005886">
    <property type="term" value="C:plasma membrane"/>
    <property type="evidence" value="ECO:0000318"/>
    <property type="project" value="GO_Central"/>
</dbReference>
<dbReference type="GO" id="GO:0005332">
    <property type="term" value="F:gamma-aminobutyric acid:sodium:chloride symporter activity"/>
    <property type="evidence" value="ECO:0000318"/>
    <property type="project" value="GO_Central"/>
</dbReference>
<dbReference type="GO" id="GO:0089718">
    <property type="term" value="P:amino acid import across plasma membrane"/>
    <property type="evidence" value="ECO:0007669"/>
    <property type="project" value="Ensembl"/>
</dbReference>
<dbReference type="GO" id="GO:0006865">
    <property type="term" value="P:amino acid transport"/>
    <property type="evidence" value="ECO:0000318"/>
    <property type="project" value="GO_Central"/>
</dbReference>
<dbReference type="GO" id="GO:0006836">
    <property type="term" value="P:neurotransmitter transport"/>
    <property type="evidence" value="ECO:0007669"/>
    <property type="project" value="UniProtKB-KW"/>
</dbReference>
<dbReference type="GO" id="GO:0035725">
    <property type="term" value="P:sodium ion transmembrane transport"/>
    <property type="evidence" value="ECO:0000318"/>
    <property type="project" value="GO_Central"/>
</dbReference>
<dbReference type="InterPro" id="IPR000175">
    <property type="entry name" value="Na/ntran_symport"/>
</dbReference>
<dbReference type="InterPro" id="IPR002981">
    <property type="entry name" value="Na/ntran_symport_GABA_GAT2"/>
</dbReference>
<dbReference type="InterPro" id="IPR037272">
    <property type="entry name" value="SNS_sf"/>
</dbReference>
<dbReference type="NCBIfam" id="NF037979">
    <property type="entry name" value="Na_transp"/>
    <property type="match status" value="1"/>
</dbReference>
<dbReference type="PANTHER" id="PTHR11616:SF111">
    <property type="entry name" value="SODIUM- AND CHLORIDE-DEPENDENT GABA TRANSPORTER 2"/>
    <property type="match status" value="1"/>
</dbReference>
<dbReference type="PANTHER" id="PTHR11616">
    <property type="entry name" value="SODIUM/CHLORIDE DEPENDENT TRANSPORTER"/>
    <property type="match status" value="1"/>
</dbReference>
<dbReference type="Pfam" id="PF00209">
    <property type="entry name" value="SNF"/>
    <property type="match status" value="1"/>
</dbReference>
<dbReference type="PRINTS" id="PR01196">
    <property type="entry name" value="GAT2TRNSPORT"/>
</dbReference>
<dbReference type="PRINTS" id="PR00176">
    <property type="entry name" value="NANEUSMPORT"/>
</dbReference>
<dbReference type="SUPFAM" id="SSF161070">
    <property type="entry name" value="SNF-like"/>
    <property type="match status" value="1"/>
</dbReference>
<dbReference type="PROSITE" id="PS00610">
    <property type="entry name" value="NA_NEUROTRAN_SYMP_1"/>
    <property type="match status" value="1"/>
</dbReference>
<dbReference type="PROSITE" id="PS00754">
    <property type="entry name" value="NA_NEUROTRAN_SYMP_2"/>
    <property type="match status" value="1"/>
</dbReference>
<dbReference type="PROSITE" id="PS50267">
    <property type="entry name" value="NA_NEUROTRAN_SYMP_3"/>
    <property type="match status" value="1"/>
</dbReference>
<sequence length="602" mass="67788">MDSRVSGTTSNGETKPVCPGLEKAAEDGALQREQWSNKMEFLLSVAGEIIGLGNVWRFPYLCYKNGGGAFFIPYLIFLFTCGIPVFLLETALGQYTSQGGITAWRKICPIFEGIGYASQMIVTLLNIYYIIVLAWALFYLFSSFTIDLPWGSCRHDWNTERCVEFQRTNGSLNATAENATSPVIEFWERRVLKISEGIQHLGALRWELALCLLLAWVVCYFCIWKGVKSTGKVVYFTATFPYLMLVVLLIRGVTLPGAAQGIQFYLYPNLTRLWDPQVWMDAGTQIFFSFAICLGCLTALGSYNKYHNNCYRDSIALCFLNSGTSFVAGFAIFSILGFMSQEQGVPISEVAESGPGLAFIAYPRAVVMLPFSPLWACCFFFMVVLLGLDSQFVCVESLVTALVDMYPRVFRKKNRREVLILGVSVTSFLVGLVMLTEGGMYVFQLFDYYAASGMCLLFVAIFESFCVAWAYGAGRFYDNIEDMIGYRPWPLIKYCWLFLTPAVCTATFLFSLIKYTPLTYNKKYKYPWWGDALGWLLALSSMVCIPAWSCYKLSTLKGSFRERVRQLLCPAKDLPQGHREGPSAPATPRTSLLILTELEPHH</sequence>
<reference key="1">
    <citation type="submission" date="2007-06" db="EMBL/GenBank/DDBJ databases">
        <authorList>
            <consortium name="NIH - Mammalian Gene Collection (MGC) project"/>
        </authorList>
    </citation>
    <scope>NUCLEOTIDE SEQUENCE [LARGE SCALE MRNA]</scope>
    <source>
        <strain>Hereford</strain>
        <tissue>Fetal medulla</tissue>
    </source>
</reference>
<feature type="chain" id="PRO_0000351503" description="Sodium- and chloride-dependent GABA transporter 2">
    <location>
        <begin position="1"/>
        <end position="602"/>
    </location>
</feature>
<feature type="topological domain" description="Cytoplasmic" evidence="3">
    <location>
        <begin position="1"/>
        <end position="40"/>
    </location>
</feature>
<feature type="transmembrane region" description="Helical; Name=1" evidence="3">
    <location>
        <begin position="41"/>
        <end position="61"/>
    </location>
</feature>
<feature type="transmembrane region" description="Helical; Name=2" evidence="3">
    <location>
        <begin position="68"/>
        <end position="88"/>
    </location>
</feature>
<feature type="transmembrane region" description="Helical; Name=3" evidence="3">
    <location>
        <begin position="121"/>
        <end position="141"/>
    </location>
</feature>
<feature type="topological domain" description="Extracellular" evidence="3">
    <location>
        <begin position="142"/>
        <end position="206"/>
    </location>
</feature>
<feature type="transmembrane region" description="Helical; Name=4" evidence="3">
    <location>
        <begin position="207"/>
        <end position="227"/>
    </location>
</feature>
<feature type="transmembrane region" description="Helical; Name=5" evidence="3">
    <location>
        <begin position="233"/>
        <end position="253"/>
    </location>
</feature>
<feature type="transmembrane region" description="Helical; Name=6" evidence="3">
    <location>
        <begin position="282"/>
        <end position="302"/>
    </location>
</feature>
<feature type="transmembrane region" description="Helical; Name=7" evidence="3">
    <location>
        <begin position="319"/>
        <end position="339"/>
    </location>
</feature>
<feature type="transmembrane region" description="Helical; Name=8" evidence="3">
    <location>
        <begin position="366"/>
        <end position="386"/>
    </location>
</feature>
<feature type="transmembrane region" description="Helical; Name=9" evidence="3">
    <location>
        <begin position="418"/>
        <end position="438"/>
    </location>
</feature>
<feature type="transmembrane region" description="Helical; Name=10" evidence="3">
    <location>
        <begin position="453"/>
        <end position="473"/>
    </location>
</feature>
<feature type="transmembrane region" description="Helical; Name=11" evidence="3">
    <location>
        <begin position="490"/>
        <end position="510"/>
    </location>
</feature>
<feature type="transmembrane region" description="Helical; Name=12" evidence="3">
    <location>
        <begin position="528"/>
        <end position="548"/>
    </location>
</feature>
<feature type="topological domain" description="Cytoplasmic" evidence="3">
    <location>
        <begin position="549"/>
        <end position="602"/>
    </location>
</feature>
<feature type="modified residue" description="Phosphothreonine" evidence="1">
    <location>
        <position position="587"/>
    </location>
</feature>
<feature type="modified residue" description="Phosphoserine" evidence="1">
    <location>
        <position position="591"/>
    </location>
</feature>
<feature type="glycosylation site" description="N-linked (GlcNAc...) asparagine" evidence="3">
    <location>
        <position position="169"/>
    </location>
</feature>
<feature type="glycosylation site" description="N-linked (GlcNAc...) asparagine" evidence="3">
    <location>
        <position position="173"/>
    </location>
</feature>
<feature type="glycosylation site" description="N-linked (GlcNAc...) asparagine" evidence="3">
    <location>
        <position position="269"/>
    </location>
</feature>
<feature type="disulfide bond" evidence="2">
    <location>
        <begin position="153"/>
        <end position="162"/>
    </location>
</feature>
<name>S6A13_BOVIN</name>
<comment type="function">
    <text evidence="1">Mediates sodium- and chloride-dependent transport of gamma-aminobutyric acid (GABA) (By similarity). Can also mediate transport of beta-alanine, taurine and hypotaurine (By similarity).</text>
</comment>
<comment type="catalytic activity">
    <reaction evidence="1">
        <text>4-aminobutanoate(out) + chloride(out) + 2 Na(+)(out) = 4-aminobutanoate(in) + chloride(in) + 2 Na(+)(in)</text>
        <dbReference type="Rhea" id="RHEA:70687"/>
        <dbReference type="ChEBI" id="CHEBI:17996"/>
        <dbReference type="ChEBI" id="CHEBI:29101"/>
        <dbReference type="ChEBI" id="CHEBI:59888"/>
    </reaction>
    <physiologicalReaction direction="left-to-right" evidence="1">
        <dbReference type="Rhea" id="RHEA:70688"/>
    </physiologicalReaction>
</comment>
<comment type="catalytic activity">
    <reaction evidence="1">
        <text>taurine(out) + chloride(out) + 2 Na(+)(out) = taurine(in) + chloride(in) + 2 Na(+)(in)</text>
        <dbReference type="Rhea" id="RHEA:71223"/>
        <dbReference type="ChEBI" id="CHEBI:17996"/>
        <dbReference type="ChEBI" id="CHEBI:29101"/>
        <dbReference type="ChEBI" id="CHEBI:507393"/>
    </reaction>
    <physiologicalReaction direction="left-to-right" evidence="1">
        <dbReference type="Rhea" id="RHEA:71224"/>
    </physiologicalReaction>
</comment>
<comment type="catalytic activity">
    <reaction evidence="1">
        <text>beta-alanine(out) + chloride(out) + 2 Na(+)(out) = beta-alanine(in) + chloride(in) + 2 Na(+)(in)</text>
        <dbReference type="Rhea" id="RHEA:71247"/>
        <dbReference type="ChEBI" id="CHEBI:17996"/>
        <dbReference type="ChEBI" id="CHEBI:29101"/>
        <dbReference type="ChEBI" id="CHEBI:57966"/>
    </reaction>
    <physiologicalReaction direction="left-to-right" evidence="1">
        <dbReference type="Rhea" id="RHEA:71248"/>
    </physiologicalReaction>
</comment>
<comment type="catalytic activity">
    <reaction evidence="1">
        <text>hypotaurine(out) + chloride(out) + 2 Na(+)(out) = hypotaurine(in) + chloride(in) + 2 Na(+)(in)</text>
        <dbReference type="Rhea" id="RHEA:71243"/>
        <dbReference type="ChEBI" id="CHEBI:17996"/>
        <dbReference type="ChEBI" id="CHEBI:29101"/>
        <dbReference type="ChEBI" id="CHEBI:57853"/>
    </reaction>
    <physiologicalReaction direction="left-to-right" evidence="1">
        <dbReference type="Rhea" id="RHEA:71244"/>
    </physiologicalReaction>
</comment>
<comment type="subcellular location">
    <subcellularLocation>
        <location evidence="1">Cell membrane</location>
        <topology evidence="3">Multi-pass membrane protein</topology>
    </subcellularLocation>
    <subcellularLocation>
        <location evidence="1">Basolateral cell membrane</location>
        <topology evidence="3">Multi-pass membrane protein</topology>
    </subcellularLocation>
</comment>
<comment type="similarity">
    <text evidence="4">Belongs to the sodium:neurotransmitter symporter (SNF) (TC 2.A.22) family. SLC6A13 subfamily.</text>
</comment>
<accession>A5PJX7</accession>
<organism>
    <name type="scientific">Bos taurus</name>
    <name type="common">Bovine</name>
    <dbReference type="NCBI Taxonomy" id="9913"/>
    <lineage>
        <taxon>Eukaryota</taxon>
        <taxon>Metazoa</taxon>
        <taxon>Chordata</taxon>
        <taxon>Craniata</taxon>
        <taxon>Vertebrata</taxon>
        <taxon>Euteleostomi</taxon>
        <taxon>Mammalia</taxon>
        <taxon>Eutheria</taxon>
        <taxon>Laurasiatheria</taxon>
        <taxon>Artiodactyla</taxon>
        <taxon>Ruminantia</taxon>
        <taxon>Pecora</taxon>
        <taxon>Bovidae</taxon>
        <taxon>Bovinae</taxon>
        <taxon>Bos</taxon>
    </lineage>
</organism>
<keyword id="KW-1003">Cell membrane</keyword>
<keyword id="KW-1015">Disulfide bond</keyword>
<keyword id="KW-0325">Glycoprotein</keyword>
<keyword id="KW-0472">Membrane</keyword>
<keyword id="KW-0532">Neurotransmitter transport</keyword>
<keyword id="KW-0597">Phosphoprotein</keyword>
<keyword id="KW-1185">Reference proteome</keyword>
<keyword id="KW-0769">Symport</keyword>
<keyword id="KW-0812">Transmembrane</keyword>
<keyword id="KW-1133">Transmembrane helix</keyword>
<keyword id="KW-0813">Transport</keyword>
<protein>
    <recommendedName>
        <fullName>Sodium- and chloride-dependent GABA transporter 2</fullName>
        <shortName>GAT-2</shortName>
    </recommendedName>
    <alternativeName>
        <fullName>Solute carrier family 6 member 13</fullName>
    </alternativeName>
</protein>
<proteinExistence type="evidence at transcript level"/>
<gene>
    <name type="primary">SLC6A13</name>
</gene>
<evidence type="ECO:0000250" key="1">
    <source>
        <dbReference type="UniProtKB" id="P31649"/>
    </source>
</evidence>
<evidence type="ECO:0000250" key="2">
    <source>
        <dbReference type="UniProtKB" id="Q7K4Y6"/>
    </source>
</evidence>
<evidence type="ECO:0000255" key="3"/>
<evidence type="ECO:0000305" key="4"/>